<comment type="function">
    <text evidence="1">Monooxygenase able to convert a wide range of ketones to the corresponding esters or lactones via a Baeyer-Villiger oxidation reaction. Can act on long-chain aliphatic ketones (2-hexanone to 2-dodecanone) and on aromatic ketones (phenylacetone and benzylacetone). Is also able to catalyze enantioselective sulfoxidation of methyl-p-tolylsulfide. In vivo, likely functions as a BVMO, but the exact nature of the physiological substrate(s) remains to be established.</text>
</comment>
<comment type="function">
    <text evidence="1">Is responsible for the activation of several thiocarbamide-containing pro-drugs into cytotoxic species. Thus, catalyzes the oxidation of the antitubercular pro-drug ethionamide (ETH) to the corresponding sulfoxide, which is further oxidized by EthA to 2-ethyl-4-amidopyridine, presumably via the unstable doubly oxidized sulfinic acid intermediate; the final metabolite 2-ethyl-4-amidopyridine has no antitubercular activity, so the cytotoxic species is a metabolite intermediate formed by EthA. Also oxidizes thiacetazone (TAC), thiobenzamide, and isothionicotinamide and thus is probably responsible, as suggested by the observation of crossover resistance, for the oxidative activation of these other thioamide antitubercular drugs.</text>
</comment>
<comment type="catalytic activity">
    <reaction evidence="1">
        <text>ethionamide + NADPH + O2 + H(+) = ethionamide S-oxide + NADP(+) + H2O</text>
        <dbReference type="Rhea" id="RHEA:47616"/>
        <dbReference type="ChEBI" id="CHEBI:4885"/>
        <dbReference type="ChEBI" id="CHEBI:15377"/>
        <dbReference type="ChEBI" id="CHEBI:15378"/>
        <dbReference type="ChEBI" id="CHEBI:15379"/>
        <dbReference type="ChEBI" id="CHEBI:57783"/>
        <dbReference type="ChEBI" id="CHEBI:58349"/>
        <dbReference type="ChEBI" id="CHEBI:87805"/>
    </reaction>
</comment>
<comment type="cofactor">
    <cofactor evidence="1">
        <name>FAD</name>
        <dbReference type="ChEBI" id="CHEBI:57692"/>
    </cofactor>
    <text evidence="1">Binds 1 FAD per subunit.</text>
</comment>
<comment type="subcellular location">
    <subcellularLocation>
        <location evidence="1">Cell membrane</location>
    </subcellularLocation>
    <text evidence="1">Is most likely membrane-associated.</text>
</comment>
<comment type="induction">
    <text evidence="1">Repressed by the transcriptional regulator EthR.</text>
</comment>
<comment type="similarity">
    <text evidence="3">Belongs to the FAD-binding monooxygenase family.</text>
</comment>
<evidence type="ECO:0000250" key="1">
    <source>
        <dbReference type="UniProtKB" id="P9WNF9"/>
    </source>
</evidence>
<evidence type="ECO:0000250" key="2">
    <source>
        <dbReference type="UniProtKB" id="Q47PU3"/>
    </source>
</evidence>
<evidence type="ECO:0000305" key="3"/>
<name>ETHA_MYCTO</name>
<sequence length="489" mass="55326">MTEHLDVVIVGAGISGVSAAWHLQDRCPTKSYAILEKRESMGGTWDLFRYPGIRSDSDMYTLGFRFRPWTGRQAIADGKPILEYVKSTAAMYGIDRHIRFHHKVISADWSTAENRWTVHIQSHGTLSALTCEFLFLCSGYYNYDEGYSPRFAGSEDFVGPIIHPQHWPEDLDYDAKNIVVIGSGATAVTLVPALADSGAKHVTMLQRSPTYIVSQPDRDGIAEKLNRWLPETMAYTAVRWKNVLRQAAVYSACQKWPRRMRKMFLSLIQRQLPEGYDVRKHFGPHYNPWDQRLCLVPNGDLFRAIRHGKVEVVTDTIERFTATGIRLNSGRELPADIIITATGLNLQLFGGATATIDGQQVDITTTMAYKGMMLSGIPNMAYTVGYTNASWTLKADLVSEFVCRLLNYMDDNGFDTVVVERPGSDVEERPFMEFTPGYVLRSLDELPKQGSRTPWRLNQNYLRDIRLIRRGKIDDEGLRFAKRPAPVGV</sequence>
<dbReference type="EC" id="1.14.13.-" evidence="1"/>
<dbReference type="EMBL" id="AE000516">
    <property type="protein sequence ID" value="AAK48336.1"/>
    <property type="molecule type" value="Genomic_DNA"/>
</dbReference>
<dbReference type="PIR" id="C70655">
    <property type="entry name" value="C70655"/>
</dbReference>
<dbReference type="RefSeq" id="WP_003899731.1">
    <property type="nucleotide sequence ID" value="NZ_KK341227.1"/>
</dbReference>
<dbReference type="SMR" id="P9WNF8"/>
<dbReference type="KEGG" id="mtc:MT3969"/>
<dbReference type="PATRIC" id="fig|83331.31.peg.4268"/>
<dbReference type="HOGENOM" id="CLU_032067_2_0_11"/>
<dbReference type="Proteomes" id="UP000001020">
    <property type="component" value="Chromosome"/>
</dbReference>
<dbReference type="GO" id="GO:0005886">
    <property type="term" value="C:plasma membrane"/>
    <property type="evidence" value="ECO:0007669"/>
    <property type="project" value="UniProtKB-SubCell"/>
</dbReference>
<dbReference type="GO" id="GO:0050660">
    <property type="term" value="F:flavin adenine dinucleotide binding"/>
    <property type="evidence" value="ECO:0007669"/>
    <property type="project" value="InterPro"/>
</dbReference>
<dbReference type="GO" id="GO:0004499">
    <property type="term" value="F:N,N-dimethylaniline monooxygenase activity"/>
    <property type="evidence" value="ECO:0007669"/>
    <property type="project" value="InterPro"/>
</dbReference>
<dbReference type="GO" id="GO:0050661">
    <property type="term" value="F:NADP binding"/>
    <property type="evidence" value="ECO:0007669"/>
    <property type="project" value="InterPro"/>
</dbReference>
<dbReference type="FunFam" id="3.50.50.60:FF:000213">
    <property type="entry name" value="FAD-containing monooxygenase EthA"/>
    <property type="match status" value="1"/>
</dbReference>
<dbReference type="FunFam" id="3.50.50.60:FF:000228">
    <property type="entry name" value="FAD-containing monooxygenase EthA"/>
    <property type="match status" value="1"/>
</dbReference>
<dbReference type="Gene3D" id="3.50.50.60">
    <property type="entry name" value="FAD/NAD(P)-binding domain"/>
    <property type="match status" value="3"/>
</dbReference>
<dbReference type="InterPro" id="IPR051820">
    <property type="entry name" value="FAD-binding_MO"/>
</dbReference>
<dbReference type="InterPro" id="IPR036188">
    <property type="entry name" value="FAD/NAD-bd_sf"/>
</dbReference>
<dbReference type="InterPro" id="IPR020946">
    <property type="entry name" value="Flavin_mOase-like"/>
</dbReference>
<dbReference type="PANTHER" id="PTHR43872">
    <property type="entry name" value="MONOOXYGENASE, PUTATIVE (AFU_ORTHOLOGUE AFUA_8G02570)-RELATED"/>
    <property type="match status" value="1"/>
</dbReference>
<dbReference type="PANTHER" id="PTHR43872:SF1">
    <property type="entry name" value="MONOOXYGENASE, PUTATIVE (AFU_ORTHOLOGUE AFUA_8G02570)-RELATED"/>
    <property type="match status" value="1"/>
</dbReference>
<dbReference type="Pfam" id="PF00743">
    <property type="entry name" value="FMO-like"/>
    <property type="match status" value="1"/>
</dbReference>
<dbReference type="Pfam" id="PF13450">
    <property type="entry name" value="NAD_binding_8"/>
    <property type="match status" value="1"/>
</dbReference>
<dbReference type="SUPFAM" id="SSF51905">
    <property type="entry name" value="FAD/NAD(P)-binding domain"/>
    <property type="match status" value="1"/>
</dbReference>
<feature type="chain" id="PRO_0000427134" description="FAD-containing monooxygenase EthA">
    <location>
        <begin position="1"/>
        <end position="489"/>
    </location>
</feature>
<feature type="binding site" evidence="2">
    <location>
        <position position="15"/>
    </location>
    <ligand>
        <name>FAD</name>
        <dbReference type="ChEBI" id="CHEBI:57692"/>
    </ligand>
</feature>
<feature type="binding site" evidence="2">
    <location>
        <position position="36"/>
    </location>
    <ligand>
        <name>FAD</name>
        <dbReference type="ChEBI" id="CHEBI:57692"/>
    </ligand>
</feature>
<feature type="binding site" evidence="2">
    <location>
        <begin position="44"/>
        <end position="47"/>
    </location>
    <ligand>
        <name>FAD</name>
        <dbReference type="ChEBI" id="CHEBI:57692"/>
    </ligand>
</feature>
<feature type="binding site" evidence="2">
    <location>
        <begin position="54"/>
        <end position="56"/>
    </location>
    <ligand>
        <name>NADP(+)</name>
        <dbReference type="ChEBI" id="CHEBI:58349"/>
    </ligand>
</feature>
<feature type="binding site" evidence="2">
    <location>
        <position position="56"/>
    </location>
    <ligand>
        <name>FAD</name>
        <dbReference type="ChEBI" id="CHEBI:57692"/>
    </ligand>
</feature>
<feature type="binding site" evidence="2">
    <location>
        <position position="104"/>
    </location>
    <ligand>
        <name>FAD</name>
        <dbReference type="ChEBI" id="CHEBI:57692"/>
    </ligand>
</feature>
<feature type="binding site" evidence="2">
    <location>
        <begin position="183"/>
        <end position="189"/>
    </location>
    <ligand>
        <name>NADP(+)</name>
        <dbReference type="ChEBI" id="CHEBI:58349"/>
    </ligand>
</feature>
<feature type="binding site" evidence="2">
    <location>
        <begin position="207"/>
        <end position="208"/>
    </location>
    <ligand>
        <name>NADP(+)</name>
        <dbReference type="ChEBI" id="CHEBI:58349"/>
    </ligand>
</feature>
<feature type="site" description="Transition state stabilizer" evidence="2">
    <location>
        <position position="292"/>
    </location>
</feature>
<protein>
    <recommendedName>
        <fullName>FAD-containing monooxygenase EthA</fullName>
        <ecNumber evidence="1">1.14.13.-</ecNumber>
    </recommendedName>
    <alternativeName>
        <fullName>Baeyer-Villiger monooxygenase EtaA</fullName>
        <shortName>BVMO</shortName>
    </alternativeName>
    <alternativeName>
        <fullName>Prodrug activator EtaA</fullName>
    </alternativeName>
</protein>
<reference key="1">
    <citation type="journal article" date="2002" name="J. Bacteriol.">
        <title>Whole-genome comparison of Mycobacterium tuberculosis clinical and laboratory strains.</title>
        <authorList>
            <person name="Fleischmann R.D."/>
            <person name="Alland D."/>
            <person name="Eisen J.A."/>
            <person name="Carpenter L."/>
            <person name="White O."/>
            <person name="Peterson J.D."/>
            <person name="DeBoy R.T."/>
            <person name="Dodson R.J."/>
            <person name="Gwinn M.L."/>
            <person name="Haft D.H."/>
            <person name="Hickey E.K."/>
            <person name="Kolonay J.F."/>
            <person name="Nelson W.C."/>
            <person name="Umayam L.A."/>
            <person name="Ermolaeva M.D."/>
            <person name="Salzberg S.L."/>
            <person name="Delcher A."/>
            <person name="Utterback T.R."/>
            <person name="Weidman J.F."/>
            <person name="Khouri H.M."/>
            <person name="Gill J."/>
            <person name="Mikula A."/>
            <person name="Bishai W."/>
            <person name="Jacobs W.R. Jr."/>
            <person name="Venter J.C."/>
            <person name="Fraser C.M."/>
        </authorList>
    </citation>
    <scope>NUCLEOTIDE SEQUENCE [LARGE SCALE GENOMIC DNA]</scope>
    <source>
        <strain>CDC 1551 / Oshkosh</strain>
    </source>
</reference>
<keyword id="KW-1003">Cell membrane</keyword>
<keyword id="KW-0274">FAD</keyword>
<keyword id="KW-0285">Flavoprotein</keyword>
<keyword id="KW-0472">Membrane</keyword>
<keyword id="KW-0503">Monooxygenase</keyword>
<keyword id="KW-0521">NADP</keyword>
<keyword id="KW-0560">Oxidoreductase</keyword>
<keyword id="KW-1185">Reference proteome</keyword>
<organism>
    <name type="scientific">Mycobacterium tuberculosis (strain CDC 1551 / Oshkosh)</name>
    <dbReference type="NCBI Taxonomy" id="83331"/>
    <lineage>
        <taxon>Bacteria</taxon>
        <taxon>Bacillati</taxon>
        <taxon>Actinomycetota</taxon>
        <taxon>Actinomycetes</taxon>
        <taxon>Mycobacteriales</taxon>
        <taxon>Mycobacteriaceae</taxon>
        <taxon>Mycobacterium</taxon>
        <taxon>Mycobacterium tuberculosis complex</taxon>
    </lineage>
</organism>
<accession>P9WNF8</accession>
<accession>L0TDR6</accession>
<accession>P96223</accession>
<accession>Q7D4Q8</accession>
<gene>
    <name type="primary">ethA</name>
    <name type="synonym">etaA</name>
    <name type="ordered locus">MT3969</name>
</gene>
<proteinExistence type="inferred from homology"/>